<sequence>MKLIILDRDGVVNQDSDAFVKSPDEWIALPGSLQAIARLTQADWTVVLATNQSGLARGLFDTATLNAIHDKMHRALAQMGGVVDAIFMCPHGPDDGCACRKPLPGMYRDIARRYDVDLAGVPAVGDSLRDLQAAAQAGCAPWLVQTGNGRKTLAQGGLPEGTRVCEDLAAVAEQLLQEA</sequence>
<proteinExistence type="evidence at protein level"/>
<keyword id="KW-0002">3D-structure</keyword>
<keyword id="KW-0119">Carbohydrate metabolism</keyword>
<keyword id="KW-0963">Cytoplasm</keyword>
<keyword id="KW-0378">Hydrolase</keyword>
<keyword id="KW-0460">Magnesium</keyword>
<keyword id="KW-0479">Metal-binding</keyword>
<keyword id="KW-0862">Zinc</keyword>
<comment type="function">
    <text evidence="2 3">Converts the D-glycero-beta-D-manno-heptose 1,7-bisphosphate (beta-HBP) intermediate into D-glycero-beta-D-manno-heptose 1-phosphate by removing the phosphate group at the C-7 position.</text>
</comment>
<comment type="catalytic activity">
    <reaction evidence="3">
        <text>D-glycero-beta-D-manno-heptose 1,7-bisphosphate + H2O = D-glycero-beta-D-manno-heptose 1-phosphate + phosphate</text>
        <dbReference type="Rhea" id="RHEA:28518"/>
        <dbReference type="ChEBI" id="CHEBI:15377"/>
        <dbReference type="ChEBI" id="CHEBI:43474"/>
        <dbReference type="ChEBI" id="CHEBI:60208"/>
        <dbReference type="ChEBI" id="CHEBI:61593"/>
        <dbReference type="EC" id="3.1.3.82"/>
    </reaction>
</comment>
<comment type="cofactor">
    <cofactor>
        <name>Mg(2+)</name>
        <dbReference type="ChEBI" id="CHEBI:18420"/>
    </cofactor>
</comment>
<comment type="cofactor">
    <cofactor>
        <name>Zn(2+)</name>
        <dbReference type="ChEBI" id="CHEBI:29105"/>
    </cofactor>
</comment>
<comment type="biophysicochemical properties">
    <kinetics>
        <KM evidence="3">6.9 uM for beta-HBP (at pH 7.5 and 25 degrees Celsius)</KM>
        <KM evidence="3">280 uM for alpha-HBP (at pH 7.5 and 25 degrees Celsius)</KM>
        <text evidence="3">kcat is 22 sec(-1) and 5.9 sec(-1) with beta-HBP and alpha-HBP as substrate, respectively. Thus, the enzyme displays 150-fold more efficiency towards the beta- than the alpha-anomer (PubMed:20050615).</text>
    </kinetics>
</comment>
<comment type="pathway">
    <text evidence="3">Nucleotide-sugar biosynthesis; ADP-L-glycero-beta-D-manno-heptose biosynthesis; ADP-L-glycero-beta-D-manno-heptose from D-glycero-beta-D-manno-heptose 7-phosphate: step 2/4.</text>
</comment>
<comment type="pathway">
    <text evidence="3">Bacterial outer membrane biogenesis; LPS core biosynthesis.</text>
</comment>
<comment type="subunit">
    <text evidence="2">Monomer.</text>
</comment>
<comment type="subcellular location">
    <subcellularLocation>
        <location evidence="1">Cytoplasm</location>
    </subcellularLocation>
</comment>
<comment type="mass spectrometry"/>
<comment type="similarity">
    <text evidence="4">Belongs to the GmhB family.</text>
</comment>
<evidence type="ECO:0000250" key="1"/>
<evidence type="ECO:0000269" key="2">
    <source>
    </source>
</evidence>
<evidence type="ECO:0000269" key="3">
    <source>
    </source>
</evidence>
<evidence type="ECO:0000305" key="4"/>
<evidence type="ECO:0007744" key="5">
    <source>
        <dbReference type="PDB" id="3L8H"/>
    </source>
</evidence>
<evidence type="ECO:0007829" key="6">
    <source>
        <dbReference type="PDB" id="3L8H"/>
    </source>
</evidence>
<protein>
    <recommendedName>
        <fullName>D-glycero-beta-D-manno-heptose-1,7-bisphosphate 7-phosphatase</fullName>
        <ecNumber>3.1.3.82</ecNumber>
    </recommendedName>
    <alternativeName>
        <fullName>D,D-heptose 1,7-bisphosphate phosphatase</fullName>
        <shortName>HBP phosphatase</shortName>
    </alternativeName>
</protein>
<organism>
    <name type="scientific">Bordetella bronchiseptica (strain ATCC BAA-588 / NCTC 13252 / RB50)</name>
    <name type="common">Alcaligenes bronchisepticus</name>
    <dbReference type="NCBI Taxonomy" id="257310"/>
    <lineage>
        <taxon>Bacteria</taxon>
        <taxon>Pseudomonadati</taxon>
        <taxon>Pseudomonadota</taxon>
        <taxon>Betaproteobacteria</taxon>
        <taxon>Burkholderiales</taxon>
        <taxon>Alcaligenaceae</taxon>
        <taxon>Bordetella</taxon>
    </lineage>
</organism>
<name>GMHBB_BORBR</name>
<accession>Q7WG29</accession>
<gene>
    <name type="ordered locus">BB4091</name>
</gene>
<dbReference type="EC" id="3.1.3.82"/>
<dbReference type="EMBL" id="BX640449">
    <property type="protein sequence ID" value="CAE34454.1"/>
    <property type="molecule type" value="Genomic_DNA"/>
</dbReference>
<dbReference type="PDB" id="3L8H">
    <property type="method" value="X-ray"/>
    <property type="resolution" value="1.68 A"/>
    <property type="chains" value="A/B/C/D=1-179"/>
</dbReference>
<dbReference type="PDBsum" id="3L8H"/>
<dbReference type="SMR" id="Q7WG29"/>
<dbReference type="KEGG" id="bbr:BB4091"/>
<dbReference type="eggNOG" id="COG0241">
    <property type="taxonomic scope" value="Bacteria"/>
</dbReference>
<dbReference type="HOGENOM" id="CLU_085077_2_0_4"/>
<dbReference type="BRENDA" id="3.1.3.82">
    <property type="organism ID" value="227"/>
</dbReference>
<dbReference type="UniPathway" id="UPA00356">
    <property type="reaction ID" value="UER00438"/>
</dbReference>
<dbReference type="UniPathway" id="UPA00958"/>
<dbReference type="EvolutionaryTrace" id="Q7WG29"/>
<dbReference type="Proteomes" id="UP000001027">
    <property type="component" value="Chromosome"/>
</dbReference>
<dbReference type="GO" id="GO:0005737">
    <property type="term" value="C:cytoplasm"/>
    <property type="evidence" value="ECO:0007669"/>
    <property type="project" value="UniProtKB-SubCell"/>
</dbReference>
<dbReference type="GO" id="GO:0034200">
    <property type="term" value="F:D-glycero-beta-D-manno-heptose 1,7-bisphosphate 7-phosphatase activity"/>
    <property type="evidence" value="ECO:0000314"/>
    <property type="project" value="UniProtKB"/>
</dbReference>
<dbReference type="GO" id="GO:0000287">
    <property type="term" value="F:magnesium ion binding"/>
    <property type="evidence" value="ECO:0000314"/>
    <property type="project" value="UniProtKB"/>
</dbReference>
<dbReference type="GO" id="GO:0008270">
    <property type="term" value="F:zinc ion binding"/>
    <property type="evidence" value="ECO:0000314"/>
    <property type="project" value="UniProtKB"/>
</dbReference>
<dbReference type="GO" id="GO:0097171">
    <property type="term" value="P:ADP-L-glycero-beta-D-manno-heptose biosynthetic process"/>
    <property type="evidence" value="ECO:0007669"/>
    <property type="project" value="UniProtKB-UniPathway"/>
</dbReference>
<dbReference type="GO" id="GO:0009244">
    <property type="term" value="P:lipopolysaccharide core region biosynthetic process"/>
    <property type="evidence" value="ECO:0007669"/>
    <property type="project" value="UniProtKB-UniPathway"/>
</dbReference>
<dbReference type="CDD" id="cd07503">
    <property type="entry name" value="HAD_HisB-N"/>
    <property type="match status" value="1"/>
</dbReference>
<dbReference type="FunFam" id="3.40.50.1000:FF:000168">
    <property type="entry name" value="D,D-heptose 1,7-bisphosphate phosphatase"/>
    <property type="match status" value="1"/>
</dbReference>
<dbReference type="Gene3D" id="3.40.50.1000">
    <property type="entry name" value="HAD superfamily/HAD-like"/>
    <property type="match status" value="1"/>
</dbReference>
<dbReference type="InterPro" id="IPR036412">
    <property type="entry name" value="HAD-like_sf"/>
</dbReference>
<dbReference type="InterPro" id="IPR006549">
    <property type="entry name" value="HAD-SF_hydro_IIIA"/>
</dbReference>
<dbReference type="InterPro" id="IPR023214">
    <property type="entry name" value="HAD_sf"/>
</dbReference>
<dbReference type="InterPro" id="IPR004446">
    <property type="entry name" value="Heptose_bisP_phosphatase"/>
</dbReference>
<dbReference type="InterPro" id="IPR006543">
    <property type="entry name" value="Histidinol-phos"/>
</dbReference>
<dbReference type="NCBIfam" id="TIGR01662">
    <property type="entry name" value="HAD-SF-IIIA"/>
    <property type="match status" value="1"/>
</dbReference>
<dbReference type="NCBIfam" id="TIGR01656">
    <property type="entry name" value="Histidinol-ppas"/>
    <property type="match status" value="1"/>
</dbReference>
<dbReference type="NCBIfam" id="NF006506">
    <property type="entry name" value="PRK08942.1"/>
    <property type="match status" value="1"/>
</dbReference>
<dbReference type="PANTHER" id="PTHR42891">
    <property type="entry name" value="D-GLYCERO-BETA-D-MANNO-HEPTOSE-1,7-BISPHOSPHATE 7-PHOSPHATASE"/>
    <property type="match status" value="1"/>
</dbReference>
<dbReference type="PANTHER" id="PTHR42891:SF1">
    <property type="entry name" value="D-GLYCERO-BETA-D-MANNO-HEPTOSE-1,7-BISPHOSPHATE 7-PHOSPHATASE"/>
    <property type="match status" value="1"/>
</dbReference>
<dbReference type="Pfam" id="PF13242">
    <property type="entry name" value="Hydrolase_like"/>
    <property type="match status" value="1"/>
</dbReference>
<dbReference type="PIRSF" id="PIRSF004682">
    <property type="entry name" value="GmhB"/>
    <property type="match status" value="1"/>
</dbReference>
<dbReference type="SFLD" id="SFLDG01134">
    <property type="entry name" value="C1.5.5:_Heptose_Bisphosphate_P"/>
    <property type="match status" value="1"/>
</dbReference>
<dbReference type="SFLD" id="SFLDG01129">
    <property type="entry name" value="C1.5:_HAD__Beta-PGM__Phosphata"/>
    <property type="match status" value="1"/>
</dbReference>
<dbReference type="SUPFAM" id="SSF56784">
    <property type="entry name" value="HAD-like"/>
    <property type="match status" value="1"/>
</dbReference>
<reference key="1">
    <citation type="journal article" date="2003" name="Nat. Genet.">
        <title>Comparative analysis of the genome sequences of Bordetella pertussis, Bordetella parapertussis and Bordetella bronchiseptica.</title>
        <authorList>
            <person name="Parkhill J."/>
            <person name="Sebaihia M."/>
            <person name="Preston A."/>
            <person name="Murphy L.D."/>
            <person name="Thomson N.R."/>
            <person name="Harris D.E."/>
            <person name="Holden M.T.G."/>
            <person name="Churcher C.M."/>
            <person name="Bentley S.D."/>
            <person name="Mungall K.L."/>
            <person name="Cerdeno-Tarraga A.-M."/>
            <person name="Temple L."/>
            <person name="James K.D."/>
            <person name="Harris B."/>
            <person name="Quail M.A."/>
            <person name="Achtman M."/>
            <person name="Atkin R."/>
            <person name="Baker S."/>
            <person name="Basham D."/>
            <person name="Bason N."/>
            <person name="Cherevach I."/>
            <person name="Chillingworth T."/>
            <person name="Collins M."/>
            <person name="Cronin A."/>
            <person name="Davis P."/>
            <person name="Doggett J."/>
            <person name="Feltwell T."/>
            <person name="Goble A."/>
            <person name="Hamlin N."/>
            <person name="Hauser H."/>
            <person name="Holroyd S."/>
            <person name="Jagels K."/>
            <person name="Leather S."/>
            <person name="Moule S."/>
            <person name="Norberczak H."/>
            <person name="O'Neil S."/>
            <person name="Ormond D."/>
            <person name="Price C."/>
            <person name="Rabbinowitsch E."/>
            <person name="Rutter S."/>
            <person name="Sanders M."/>
            <person name="Saunders D."/>
            <person name="Seeger K."/>
            <person name="Sharp S."/>
            <person name="Simmonds M."/>
            <person name="Skelton J."/>
            <person name="Squares R."/>
            <person name="Squares S."/>
            <person name="Stevens K."/>
            <person name="Unwin L."/>
            <person name="Whitehead S."/>
            <person name="Barrell B.G."/>
            <person name="Maskell D.J."/>
        </authorList>
    </citation>
    <scope>NUCLEOTIDE SEQUENCE [LARGE SCALE GENOMIC DNA]</scope>
    <source>
        <strain>ATCC BAA-588 / NCTC 13252 / RB50</strain>
    </source>
</reference>
<reference key="2">
    <citation type="journal article" date="2010" name="Biochemistry">
        <title>Divergence of biochemical function in the HAD superfamily: D-glycero-D-manno-heptose-1,7-bisphosphate phosphatase (GmhB).</title>
        <authorList>
            <person name="Wang L."/>
            <person name="Huang H."/>
            <person name="Nguyen H.H."/>
            <person name="Allen K.N."/>
            <person name="Mariano P.S."/>
            <person name="Dunaway-Mariano D."/>
        </authorList>
    </citation>
    <scope>FUNCTION</scope>
    <scope>CATALYTIC ACTIVITY</scope>
    <scope>SUBSTRATE SPECIFICITY</scope>
    <scope>KINETIC PARAMETERS</scope>
    <scope>MASS SPECTROMETRY</scope>
    <scope>PATHWAY</scope>
</reference>
<reference key="3">
    <citation type="journal article" date="2010" name="Biochemistry">
        <title>Structural determinants of substrate recognition in the HAD superfamily member D-glycero-D-manno-heptose-1,7-bisphosphate phosphatase (GmhB).</title>
        <authorList>
            <person name="Nguyen H.H."/>
            <person name="Wang L."/>
            <person name="Huang H."/>
            <person name="Peisach E."/>
            <person name="Dunaway-Mariano D."/>
            <person name="Allen K.N."/>
        </authorList>
    </citation>
    <scope>X-RAY CRYSTALLOGRAPHY (1.68 ANGSTROMS) IN COMPLEX WITH DIVALENT CATIONS AND SUBSTRATE ANALOGS</scope>
    <scope>FUNCTION</scope>
    <scope>SUBUNIT</scope>
</reference>
<feature type="chain" id="PRO_0000417695" description="D-glycero-beta-D-manno-heptose-1,7-bisphosphate 7-phosphatase">
    <location>
        <begin position="1"/>
        <end position="179"/>
    </location>
</feature>
<feature type="active site" description="Nucleophile">
    <location>
        <position position="7"/>
    </location>
</feature>
<feature type="active site" description="Proton donor">
    <location>
        <position position="9"/>
    </location>
</feature>
<feature type="binding site" evidence="2 5">
    <location>
        <position position="7"/>
    </location>
    <ligand>
        <name>Mg(2+)</name>
        <dbReference type="ChEBI" id="CHEBI:18420"/>
    </ligand>
</feature>
<feature type="binding site" evidence="2">
    <location>
        <position position="7"/>
    </location>
    <ligand>
        <name>substrate</name>
    </ligand>
</feature>
<feature type="binding site" evidence="2 5">
    <location>
        <position position="9"/>
    </location>
    <ligand>
        <name>Mg(2+)</name>
        <dbReference type="ChEBI" id="CHEBI:18420"/>
    </ligand>
</feature>
<feature type="binding site">
    <location>
        <begin position="15"/>
        <end position="19"/>
    </location>
    <ligand>
        <name>substrate</name>
    </ligand>
</feature>
<feature type="binding site">
    <location>
        <begin position="50"/>
        <end position="53"/>
    </location>
    <ligand>
        <name>substrate</name>
    </ligand>
</feature>
<feature type="binding site" evidence="2">
    <location>
        <position position="57"/>
    </location>
    <ligand>
        <name>substrate</name>
    </ligand>
</feature>
<feature type="binding site" evidence="2 5">
    <location>
        <position position="89"/>
    </location>
    <ligand>
        <name>Zn(2+)</name>
        <dbReference type="ChEBI" id="CHEBI:29105"/>
    </ligand>
</feature>
<feature type="binding site" evidence="2 5">
    <location>
        <position position="91"/>
    </location>
    <ligand>
        <name>Zn(2+)</name>
        <dbReference type="ChEBI" id="CHEBI:29105"/>
    </ligand>
</feature>
<feature type="binding site" evidence="2 5">
    <location>
        <position position="97"/>
    </location>
    <ligand>
        <name>Zn(2+)</name>
        <dbReference type="ChEBI" id="CHEBI:29105"/>
    </ligand>
</feature>
<feature type="binding site" evidence="2 5">
    <location>
        <position position="99"/>
    </location>
    <ligand>
        <name>Zn(2+)</name>
        <dbReference type="ChEBI" id="CHEBI:29105"/>
    </ligand>
</feature>
<feature type="binding site" evidence="2">
    <location>
        <position position="100"/>
    </location>
    <ligand>
        <name>substrate</name>
    </ligand>
</feature>
<feature type="binding site" evidence="5">
    <location>
        <position position="126"/>
    </location>
    <ligand>
        <name>Mg(2+)</name>
        <dbReference type="ChEBI" id="CHEBI:18420"/>
    </ligand>
</feature>
<feature type="binding site" evidence="2">
    <location>
        <position position="129"/>
    </location>
    <ligand>
        <name>substrate</name>
    </ligand>
</feature>
<feature type="site" description="Stabilizes the phosphoryl group" evidence="1">
    <location>
        <position position="50"/>
    </location>
</feature>
<feature type="site" description="Contributes to substrate recognition" evidence="1">
    <location>
        <position position="100"/>
    </location>
</feature>
<feature type="site" description="Stabilizes the phosphoryl group" evidence="1">
    <location>
        <position position="101"/>
    </location>
</feature>
<feature type="strand" evidence="6">
    <location>
        <begin position="3"/>
        <end position="6"/>
    </location>
</feature>
<feature type="turn" evidence="6">
    <location>
        <begin position="9"/>
        <end position="11"/>
    </location>
</feature>
<feature type="helix" evidence="6">
    <location>
        <begin position="23"/>
        <end position="25"/>
    </location>
</feature>
<feature type="helix" evidence="6">
    <location>
        <begin position="32"/>
        <end position="41"/>
    </location>
</feature>
<feature type="strand" evidence="6">
    <location>
        <begin position="45"/>
        <end position="51"/>
    </location>
</feature>
<feature type="turn" evidence="6">
    <location>
        <begin position="53"/>
        <end position="58"/>
    </location>
</feature>
<feature type="helix" evidence="6">
    <location>
        <begin position="62"/>
        <end position="78"/>
    </location>
</feature>
<feature type="strand" evidence="6">
    <location>
        <begin position="85"/>
        <end position="89"/>
    </location>
</feature>
<feature type="strand" evidence="6">
    <location>
        <begin position="98"/>
        <end position="100"/>
    </location>
</feature>
<feature type="helix" evidence="6">
    <location>
        <begin position="105"/>
        <end position="114"/>
    </location>
</feature>
<feature type="strand" evidence="6">
    <location>
        <begin position="122"/>
        <end position="127"/>
    </location>
</feature>
<feature type="helix" evidence="6">
    <location>
        <begin position="128"/>
        <end position="137"/>
    </location>
</feature>
<feature type="strand" evidence="6">
    <location>
        <begin position="140"/>
        <end position="145"/>
    </location>
</feature>
<feature type="turn" evidence="6">
    <location>
        <begin position="146"/>
        <end position="148"/>
    </location>
</feature>
<feature type="helix" evidence="6">
    <location>
        <begin position="149"/>
        <end position="155"/>
    </location>
</feature>
<feature type="strand" evidence="6">
    <location>
        <begin position="162"/>
        <end position="167"/>
    </location>
</feature>
<feature type="helix" evidence="6">
    <location>
        <begin position="168"/>
        <end position="177"/>
    </location>
</feature>